<dbReference type="EC" id="1.1.1.282" evidence="1"/>
<dbReference type="EMBL" id="AM933173">
    <property type="protein sequence ID" value="CAR37615.1"/>
    <property type="molecule type" value="Genomic_DNA"/>
</dbReference>
<dbReference type="RefSeq" id="WP_000383488.1">
    <property type="nucleotide sequence ID" value="NC_011274.1"/>
</dbReference>
<dbReference type="SMR" id="B5RAU7"/>
<dbReference type="KEGG" id="seg:SG1757"/>
<dbReference type="HOGENOM" id="CLU_044063_4_4_6"/>
<dbReference type="UniPathway" id="UPA00053">
    <property type="reaction ID" value="UER00087"/>
</dbReference>
<dbReference type="Proteomes" id="UP000008321">
    <property type="component" value="Chromosome"/>
</dbReference>
<dbReference type="GO" id="GO:0030266">
    <property type="term" value="F:quinate 3-dehydrogenase (NAD+) activity"/>
    <property type="evidence" value="ECO:0007669"/>
    <property type="project" value="UniProtKB-UniRule"/>
</dbReference>
<dbReference type="GO" id="GO:0052733">
    <property type="term" value="F:quinate 3-dehydrogenase (NADP+) activity"/>
    <property type="evidence" value="ECO:0007669"/>
    <property type="project" value="InterPro"/>
</dbReference>
<dbReference type="GO" id="GO:0052734">
    <property type="term" value="F:shikimate 3-dehydrogenase (NAD+) activity"/>
    <property type="evidence" value="ECO:0007669"/>
    <property type="project" value="InterPro"/>
</dbReference>
<dbReference type="GO" id="GO:0004764">
    <property type="term" value="F:shikimate 3-dehydrogenase (NADP+) activity"/>
    <property type="evidence" value="ECO:0007669"/>
    <property type="project" value="UniProtKB-UniRule"/>
</dbReference>
<dbReference type="GO" id="GO:0008652">
    <property type="term" value="P:amino acid biosynthetic process"/>
    <property type="evidence" value="ECO:0007669"/>
    <property type="project" value="UniProtKB-KW"/>
</dbReference>
<dbReference type="GO" id="GO:0009073">
    <property type="term" value="P:aromatic amino acid family biosynthetic process"/>
    <property type="evidence" value="ECO:0007669"/>
    <property type="project" value="UniProtKB-KW"/>
</dbReference>
<dbReference type="GO" id="GO:0009423">
    <property type="term" value="P:chorismate biosynthetic process"/>
    <property type="evidence" value="ECO:0007669"/>
    <property type="project" value="UniProtKB-UniRule"/>
</dbReference>
<dbReference type="GO" id="GO:0019632">
    <property type="term" value="P:shikimate metabolic process"/>
    <property type="evidence" value="ECO:0007669"/>
    <property type="project" value="TreeGrafter"/>
</dbReference>
<dbReference type="CDD" id="cd01065">
    <property type="entry name" value="NAD_bind_Shikimate_DH"/>
    <property type="match status" value="1"/>
</dbReference>
<dbReference type="FunFam" id="3.40.50.10860:FF:000004">
    <property type="entry name" value="Quinate/shikimate dehydrogenase"/>
    <property type="match status" value="1"/>
</dbReference>
<dbReference type="FunFam" id="3.40.50.720:FF:000086">
    <property type="entry name" value="Quinate/shikimate dehydrogenase"/>
    <property type="match status" value="1"/>
</dbReference>
<dbReference type="Gene3D" id="3.40.50.10860">
    <property type="entry name" value="Leucine Dehydrogenase, chain A, domain 1"/>
    <property type="match status" value="1"/>
</dbReference>
<dbReference type="Gene3D" id="3.40.50.720">
    <property type="entry name" value="NAD(P)-binding Rossmann-like Domain"/>
    <property type="match status" value="1"/>
</dbReference>
<dbReference type="HAMAP" id="MF_00222">
    <property type="entry name" value="Shikimate_DH_AroE"/>
    <property type="match status" value="1"/>
</dbReference>
<dbReference type="HAMAP" id="MF_01578">
    <property type="entry name" value="Shikimate_DH_YdiB"/>
    <property type="match status" value="1"/>
</dbReference>
<dbReference type="InterPro" id="IPR046346">
    <property type="entry name" value="Aminoacid_DH-like_N_sf"/>
</dbReference>
<dbReference type="InterPro" id="IPR036291">
    <property type="entry name" value="NAD(P)-bd_dom_sf"/>
</dbReference>
<dbReference type="InterPro" id="IPR022872">
    <property type="entry name" value="Quinate/Shikimate_DH"/>
</dbReference>
<dbReference type="InterPro" id="IPR041121">
    <property type="entry name" value="SDH_C"/>
</dbReference>
<dbReference type="InterPro" id="IPR013708">
    <property type="entry name" value="Shikimate_DH-bd_N"/>
</dbReference>
<dbReference type="InterPro" id="IPR022893">
    <property type="entry name" value="Shikimate_DH_fam"/>
</dbReference>
<dbReference type="NCBIfam" id="NF009390">
    <property type="entry name" value="PRK12749.1"/>
    <property type="match status" value="1"/>
</dbReference>
<dbReference type="PANTHER" id="PTHR21089:SF1">
    <property type="entry name" value="BIFUNCTIONAL 3-DEHYDROQUINATE DEHYDRATASE_SHIKIMATE DEHYDROGENASE, CHLOROPLASTIC"/>
    <property type="match status" value="1"/>
</dbReference>
<dbReference type="PANTHER" id="PTHR21089">
    <property type="entry name" value="SHIKIMATE DEHYDROGENASE"/>
    <property type="match status" value="1"/>
</dbReference>
<dbReference type="Pfam" id="PF18317">
    <property type="entry name" value="SDH_C"/>
    <property type="match status" value="1"/>
</dbReference>
<dbReference type="Pfam" id="PF08501">
    <property type="entry name" value="Shikimate_dh_N"/>
    <property type="match status" value="1"/>
</dbReference>
<dbReference type="SUPFAM" id="SSF53223">
    <property type="entry name" value="Aminoacid dehydrogenase-like, N-terminal domain"/>
    <property type="match status" value="1"/>
</dbReference>
<dbReference type="SUPFAM" id="SSF51735">
    <property type="entry name" value="NAD(P)-binding Rossmann-fold domains"/>
    <property type="match status" value="1"/>
</dbReference>
<reference key="1">
    <citation type="journal article" date="2008" name="Genome Res.">
        <title>Comparative genome analysis of Salmonella enteritidis PT4 and Salmonella gallinarum 287/91 provides insights into evolutionary and host adaptation pathways.</title>
        <authorList>
            <person name="Thomson N.R."/>
            <person name="Clayton D.J."/>
            <person name="Windhorst D."/>
            <person name="Vernikos G."/>
            <person name="Davidson S."/>
            <person name="Churcher C."/>
            <person name="Quail M.A."/>
            <person name="Stevens M."/>
            <person name="Jones M.A."/>
            <person name="Watson M."/>
            <person name="Barron A."/>
            <person name="Layton A."/>
            <person name="Pickard D."/>
            <person name="Kingsley R.A."/>
            <person name="Bignell A."/>
            <person name="Clark L."/>
            <person name="Harris B."/>
            <person name="Ormond D."/>
            <person name="Abdellah Z."/>
            <person name="Brooks K."/>
            <person name="Cherevach I."/>
            <person name="Chillingworth T."/>
            <person name="Woodward J."/>
            <person name="Norberczak H."/>
            <person name="Lord A."/>
            <person name="Arrowsmith C."/>
            <person name="Jagels K."/>
            <person name="Moule S."/>
            <person name="Mungall K."/>
            <person name="Saunders M."/>
            <person name="Whitehead S."/>
            <person name="Chabalgoity J.A."/>
            <person name="Maskell D."/>
            <person name="Humphreys T."/>
            <person name="Roberts M."/>
            <person name="Barrow P.A."/>
            <person name="Dougan G."/>
            <person name="Parkhill J."/>
        </authorList>
    </citation>
    <scope>NUCLEOTIDE SEQUENCE [LARGE SCALE GENOMIC DNA]</scope>
    <source>
        <strain>287/91 / NCTC 13346</strain>
    </source>
</reference>
<gene>
    <name evidence="1" type="primary">ydiB</name>
    <name type="ordered locus">SG1757</name>
</gene>
<sequence>MDVTAKYELIGLMAYPIRHSLSPEMQNKALEKAGLPYTYMAFEVDNTTFASAIEGLKALKMRGTGVSMPNKQLACEYVDELTPAAKLVGAINTIVNDDGYLRGYNTDGTGHIRAIKESGFDIRGKTMVLLGAGGAATAIGAQAAIEGIKEIKLFNRKDDFFEKAVAFAKRVNENTDCVVTVTDLADQHAFTEALASADILTNGTKVGMKPLENESLIGDVSLLRPELLVTECVYNPHMTKLLQQAQQAGCKTIDGYGMLLWQGAEQFELWTGKAFPLDYVKQVMGFTA</sequence>
<comment type="function">
    <text evidence="1">The actual biological function of YdiB remains unclear, nor is it known whether 3-dehydroshikimate or quinate represents the natural substrate. Catalyzes the reversible NAD-dependent reduction of both 3-dehydroshikimate (DHSA) and 3-dehydroquinate to yield shikimate (SA) and quinate, respectively. It can use both NAD or NADP for catalysis, however it has higher catalytic efficiency with NAD.</text>
</comment>
<comment type="catalytic activity">
    <reaction evidence="1">
        <text>L-quinate + NAD(+) = 3-dehydroquinate + NADH + H(+)</text>
        <dbReference type="Rhea" id="RHEA:22364"/>
        <dbReference type="ChEBI" id="CHEBI:15378"/>
        <dbReference type="ChEBI" id="CHEBI:29751"/>
        <dbReference type="ChEBI" id="CHEBI:32364"/>
        <dbReference type="ChEBI" id="CHEBI:57540"/>
        <dbReference type="ChEBI" id="CHEBI:57945"/>
        <dbReference type="EC" id="1.1.1.282"/>
    </reaction>
</comment>
<comment type="catalytic activity">
    <reaction evidence="1">
        <text>L-quinate + NADP(+) = 3-dehydroquinate + NADPH + H(+)</text>
        <dbReference type="Rhea" id="RHEA:18425"/>
        <dbReference type="ChEBI" id="CHEBI:15378"/>
        <dbReference type="ChEBI" id="CHEBI:29751"/>
        <dbReference type="ChEBI" id="CHEBI:32364"/>
        <dbReference type="ChEBI" id="CHEBI:57783"/>
        <dbReference type="ChEBI" id="CHEBI:58349"/>
        <dbReference type="EC" id="1.1.1.282"/>
    </reaction>
</comment>
<comment type="catalytic activity">
    <reaction evidence="1">
        <text>shikimate + NADP(+) = 3-dehydroshikimate + NADPH + H(+)</text>
        <dbReference type="Rhea" id="RHEA:17737"/>
        <dbReference type="ChEBI" id="CHEBI:15378"/>
        <dbReference type="ChEBI" id="CHEBI:16630"/>
        <dbReference type="ChEBI" id="CHEBI:36208"/>
        <dbReference type="ChEBI" id="CHEBI:57783"/>
        <dbReference type="ChEBI" id="CHEBI:58349"/>
        <dbReference type="EC" id="1.1.1.282"/>
    </reaction>
</comment>
<comment type="catalytic activity">
    <reaction evidence="1">
        <text>shikimate + NAD(+) = 3-dehydroshikimate + NADH + H(+)</text>
        <dbReference type="Rhea" id="RHEA:17741"/>
        <dbReference type="ChEBI" id="CHEBI:15378"/>
        <dbReference type="ChEBI" id="CHEBI:16630"/>
        <dbReference type="ChEBI" id="CHEBI:36208"/>
        <dbReference type="ChEBI" id="CHEBI:57540"/>
        <dbReference type="ChEBI" id="CHEBI:57945"/>
        <dbReference type="EC" id="1.1.1.282"/>
    </reaction>
</comment>
<comment type="pathway">
    <text evidence="1">Metabolic intermediate biosynthesis; chorismate biosynthesis; chorismate from D-erythrose 4-phosphate and phosphoenolpyruvate: step 4/7.</text>
</comment>
<comment type="subunit">
    <text evidence="1">Homodimer.</text>
</comment>
<comment type="similarity">
    <text evidence="1">Belongs to the shikimate dehydrogenase family.</text>
</comment>
<feature type="chain" id="PRO_1000147558" description="Quinate/shikimate dehydrogenase">
    <location>
        <begin position="1"/>
        <end position="288"/>
    </location>
</feature>
<feature type="binding site" evidence="1">
    <location>
        <position position="71"/>
    </location>
    <ligand>
        <name>substrate</name>
    </ligand>
</feature>
<feature type="binding site" evidence="1">
    <location>
        <position position="107"/>
    </location>
    <ligand>
        <name>substrate</name>
    </ligand>
</feature>
<feature type="binding site" evidence="1">
    <location>
        <begin position="132"/>
        <end position="135"/>
    </location>
    <ligand>
        <name>NAD(+)</name>
        <dbReference type="ChEBI" id="CHEBI:57540"/>
    </ligand>
</feature>
<feature type="binding site" evidence="1">
    <location>
        <begin position="155"/>
        <end position="158"/>
    </location>
    <ligand>
        <name>NAD(+)</name>
        <dbReference type="ChEBI" id="CHEBI:57540"/>
    </ligand>
</feature>
<feature type="binding site" evidence="1">
    <location>
        <position position="205"/>
    </location>
    <ligand>
        <name>NAD(+)</name>
        <dbReference type="ChEBI" id="CHEBI:57540"/>
    </ligand>
</feature>
<feature type="binding site" evidence="1">
    <location>
        <begin position="232"/>
        <end position="235"/>
    </location>
    <ligand>
        <name>NAD(+)</name>
        <dbReference type="ChEBI" id="CHEBI:57540"/>
    </ligand>
</feature>
<feature type="binding site" evidence="1">
    <location>
        <position position="255"/>
    </location>
    <ligand>
        <name>NAD(+)</name>
        <dbReference type="ChEBI" id="CHEBI:57540"/>
    </ligand>
</feature>
<evidence type="ECO:0000255" key="1">
    <source>
        <dbReference type="HAMAP-Rule" id="MF_01578"/>
    </source>
</evidence>
<name>YDIB_SALG2</name>
<proteinExistence type="inferred from homology"/>
<accession>B5RAU7</accession>
<keyword id="KW-0028">Amino-acid biosynthesis</keyword>
<keyword id="KW-0057">Aromatic amino acid biosynthesis</keyword>
<keyword id="KW-0520">NAD</keyword>
<keyword id="KW-0521">NADP</keyword>
<keyword id="KW-0560">Oxidoreductase</keyword>
<protein>
    <recommendedName>
        <fullName evidence="1">Quinate/shikimate dehydrogenase</fullName>
        <ecNumber evidence="1">1.1.1.282</ecNumber>
    </recommendedName>
    <alternativeName>
        <fullName evidence="1">NAD-dependent shikimate 5-dehydrogenase</fullName>
    </alternativeName>
</protein>
<organism>
    <name type="scientific">Salmonella gallinarum (strain 287/91 / NCTC 13346)</name>
    <dbReference type="NCBI Taxonomy" id="550538"/>
    <lineage>
        <taxon>Bacteria</taxon>
        <taxon>Pseudomonadati</taxon>
        <taxon>Pseudomonadota</taxon>
        <taxon>Gammaproteobacteria</taxon>
        <taxon>Enterobacterales</taxon>
        <taxon>Enterobacteriaceae</taxon>
        <taxon>Salmonella</taxon>
    </lineage>
</organism>